<reference key="1">
    <citation type="journal article" date="2001" name="Nature">
        <title>Complete genome sequence of a multiple drug resistant Salmonella enterica serovar Typhi CT18.</title>
        <authorList>
            <person name="Parkhill J."/>
            <person name="Dougan G."/>
            <person name="James K.D."/>
            <person name="Thomson N.R."/>
            <person name="Pickard D."/>
            <person name="Wain J."/>
            <person name="Churcher C.M."/>
            <person name="Mungall K.L."/>
            <person name="Bentley S.D."/>
            <person name="Holden M.T.G."/>
            <person name="Sebaihia M."/>
            <person name="Baker S."/>
            <person name="Basham D."/>
            <person name="Brooks K."/>
            <person name="Chillingworth T."/>
            <person name="Connerton P."/>
            <person name="Cronin A."/>
            <person name="Davis P."/>
            <person name="Davies R.M."/>
            <person name="Dowd L."/>
            <person name="White N."/>
            <person name="Farrar J."/>
            <person name="Feltwell T."/>
            <person name="Hamlin N."/>
            <person name="Haque A."/>
            <person name="Hien T.T."/>
            <person name="Holroyd S."/>
            <person name="Jagels K."/>
            <person name="Krogh A."/>
            <person name="Larsen T.S."/>
            <person name="Leather S."/>
            <person name="Moule S."/>
            <person name="O'Gaora P."/>
            <person name="Parry C."/>
            <person name="Quail M.A."/>
            <person name="Rutherford K.M."/>
            <person name="Simmonds M."/>
            <person name="Skelton J."/>
            <person name="Stevens K."/>
            <person name="Whitehead S."/>
            <person name="Barrell B.G."/>
        </authorList>
    </citation>
    <scope>NUCLEOTIDE SEQUENCE [LARGE SCALE GENOMIC DNA]</scope>
    <source>
        <strain>CT18</strain>
    </source>
</reference>
<reference key="2">
    <citation type="journal article" date="2003" name="J. Bacteriol.">
        <title>Comparative genomics of Salmonella enterica serovar Typhi strains Ty2 and CT18.</title>
        <authorList>
            <person name="Deng W."/>
            <person name="Liou S.-R."/>
            <person name="Plunkett G. III"/>
            <person name="Mayhew G.F."/>
            <person name="Rose D.J."/>
            <person name="Burland V."/>
            <person name="Kodoyianni V."/>
            <person name="Schwartz D.C."/>
            <person name="Blattner F.R."/>
        </authorList>
    </citation>
    <scope>NUCLEOTIDE SEQUENCE [LARGE SCALE GENOMIC DNA]</scope>
    <source>
        <strain>ATCC 700931 / Ty2</strain>
    </source>
</reference>
<evidence type="ECO:0000250" key="1"/>
<evidence type="ECO:0000255" key="2"/>
<evidence type="ECO:0000305" key="3"/>
<sequence length="417" mass="44200">MFRRLLIATLIGILAALAVAAFRHAMQLLEWIFLSNDTGSLVNAAEGLSPWRRLITPALGGLAAGLLLWGWQKMNQQRPHAPTDYMEALQTDGQFDVGASLVKSLASLLVVVSGSAIGREGAMILLAALAASSFARRFTPREEWKLWIASGAAAGMAGAYHAPLAGSLFIAEILFGTLMLASLGPVVVSAVVALLTTHVLNGSDSLLYTVHLTVDLYAREYVMIVSTGLVAGLWGPLLMWLMTASHNSFLRLKLSPPWQLALGGLIVGLLSLLTPTVWGNGYSVVQSFLLSPPLFSLIGGIFACKILAVLASSGSGAPGGVFTPTLFVGLSIGMFLGRIWGFWLPGSDEIAILLGLAGMATLLAATTHAPIMSTLMICEMTGEYQLLPGLLIACVVASVLSRTLRHDSIYRQHAAEH</sequence>
<organism>
    <name type="scientific">Salmonella typhi</name>
    <dbReference type="NCBI Taxonomy" id="90370"/>
    <lineage>
        <taxon>Bacteria</taxon>
        <taxon>Pseudomonadati</taxon>
        <taxon>Pseudomonadota</taxon>
        <taxon>Gammaproteobacteria</taxon>
        <taxon>Enterobacterales</taxon>
        <taxon>Enterobacteriaceae</taxon>
        <taxon>Salmonella</taxon>
    </lineage>
</organism>
<accession>Q8Z6Y0</accession>
<keyword id="KW-0997">Cell inner membrane</keyword>
<keyword id="KW-1003">Cell membrane</keyword>
<keyword id="KW-0868">Chloride</keyword>
<keyword id="KW-0869">Chloride channel</keyword>
<keyword id="KW-0407">Ion channel</keyword>
<keyword id="KW-0406">Ion transport</keyword>
<keyword id="KW-0472">Membrane</keyword>
<keyword id="KW-0812">Transmembrane</keyword>
<keyword id="KW-1133">Transmembrane helix</keyword>
<keyword id="KW-0813">Transport</keyword>
<keyword id="KW-0851">Voltage-gated channel</keyword>
<protein>
    <recommendedName>
        <fullName>Voltage-gated ClC-type chloride channel ClcB</fullName>
    </recommendedName>
</protein>
<name>CLCB_SALTI</name>
<proteinExistence type="inferred from homology"/>
<feature type="chain" id="PRO_0000094488" description="Voltage-gated ClC-type chloride channel ClcB">
    <location>
        <begin position="1"/>
        <end position="417"/>
    </location>
</feature>
<feature type="topological domain" description="Cytoplasmic" evidence="2">
    <location>
        <begin position="1"/>
        <end position="4"/>
    </location>
</feature>
<feature type="transmembrane region" description="Helical" evidence="2">
    <location>
        <begin position="5"/>
        <end position="25"/>
    </location>
</feature>
<feature type="topological domain" description="Periplasmic" evidence="2">
    <location>
        <begin position="26"/>
        <end position="53"/>
    </location>
</feature>
<feature type="transmembrane region" description="Helical" evidence="2">
    <location>
        <begin position="54"/>
        <end position="74"/>
    </location>
</feature>
<feature type="topological domain" description="Cytoplasmic" evidence="2">
    <location>
        <begin position="75"/>
        <end position="145"/>
    </location>
</feature>
<feature type="transmembrane region" description="Helical" evidence="2">
    <location>
        <begin position="146"/>
        <end position="166"/>
    </location>
</feature>
<feature type="topological domain" description="Periplasmic" evidence="2">
    <location>
        <begin position="167"/>
        <end position="172"/>
    </location>
</feature>
<feature type="transmembrane region" description="Helical" evidence="2">
    <location>
        <begin position="173"/>
        <end position="195"/>
    </location>
</feature>
<feature type="topological domain" description="Cytoplasmic" evidence="2">
    <location>
        <begin position="196"/>
        <end position="221"/>
    </location>
</feature>
<feature type="transmembrane region" description="Helical" evidence="2">
    <location>
        <begin position="222"/>
        <end position="242"/>
    </location>
</feature>
<feature type="topological domain" description="Periplasmic" evidence="2">
    <location>
        <begin position="243"/>
        <end position="257"/>
    </location>
</feature>
<feature type="transmembrane region" description="Helical" evidence="2">
    <location>
        <begin position="258"/>
        <end position="278"/>
    </location>
</feature>
<feature type="topological domain" description="Cytoplasmic" evidence="2">
    <location>
        <begin position="279"/>
        <end position="287"/>
    </location>
</feature>
<feature type="transmembrane region" description="Helical" evidence="2">
    <location>
        <begin position="288"/>
        <end position="308"/>
    </location>
</feature>
<feature type="topological domain" description="Periplasmic" evidence="2">
    <location>
        <begin position="309"/>
        <end position="315"/>
    </location>
</feature>
<feature type="transmembrane region" description="Helical" evidence="2">
    <location>
        <begin position="316"/>
        <end position="336"/>
    </location>
</feature>
<feature type="topological domain" description="Cytoplasmic" evidence="2">
    <location>
        <begin position="337"/>
        <end position="338"/>
    </location>
</feature>
<feature type="transmembrane region" description="Helical" evidence="2">
    <location>
        <begin position="339"/>
        <end position="359"/>
    </location>
</feature>
<feature type="topological domain" description="Periplasmic" evidence="2">
    <location>
        <begin position="360"/>
        <end position="379"/>
    </location>
</feature>
<feature type="transmembrane region" description="Helical" evidence="2">
    <location>
        <begin position="380"/>
        <end position="400"/>
    </location>
</feature>
<feature type="topological domain" description="Cytoplasmic" evidence="2">
    <location>
        <begin position="401"/>
        <end position="417"/>
    </location>
</feature>
<dbReference type="EMBL" id="AL513382">
    <property type="protein sequence ID" value="CAD01823.1"/>
    <property type="status" value="ALT_INIT"/>
    <property type="molecule type" value="Genomic_DNA"/>
</dbReference>
<dbReference type="EMBL" id="AE014613">
    <property type="protein sequence ID" value="AAO69055.1"/>
    <property type="status" value="ALT_INIT"/>
    <property type="molecule type" value="Genomic_DNA"/>
</dbReference>
<dbReference type="PIR" id="AF0681">
    <property type="entry name" value="AF0681"/>
</dbReference>
<dbReference type="RefSeq" id="NP_455989.3">
    <property type="nucleotide sequence ID" value="NC_003198.1"/>
</dbReference>
<dbReference type="SMR" id="Q8Z6Y0"/>
<dbReference type="STRING" id="220341.gene:17585513"/>
<dbReference type="KEGG" id="stt:t1411"/>
<dbReference type="KEGG" id="sty:STY1574"/>
<dbReference type="PATRIC" id="fig|220341.7.peg.1583"/>
<dbReference type="eggNOG" id="COG0038">
    <property type="taxonomic scope" value="Bacteria"/>
</dbReference>
<dbReference type="HOGENOM" id="CLU_015263_5_2_6"/>
<dbReference type="OMA" id="VIFVMEV"/>
<dbReference type="Proteomes" id="UP000000541">
    <property type="component" value="Chromosome"/>
</dbReference>
<dbReference type="Proteomes" id="UP000002670">
    <property type="component" value="Chromosome"/>
</dbReference>
<dbReference type="GO" id="GO:0034707">
    <property type="term" value="C:chloride channel complex"/>
    <property type="evidence" value="ECO:0007669"/>
    <property type="project" value="UniProtKB-KW"/>
</dbReference>
<dbReference type="GO" id="GO:0005886">
    <property type="term" value="C:plasma membrane"/>
    <property type="evidence" value="ECO:0007669"/>
    <property type="project" value="UniProtKB-SubCell"/>
</dbReference>
<dbReference type="GO" id="GO:0005247">
    <property type="term" value="F:voltage-gated chloride channel activity"/>
    <property type="evidence" value="ECO:0007669"/>
    <property type="project" value="UniProtKB-UniRule"/>
</dbReference>
<dbReference type="GO" id="GO:0010447">
    <property type="term" value="P:response to acidic pH"/>
    <property type="evidence" value="ECO:0007669"/>
    <property type="project" value="InterPro"/>
</dbReference>
<dbReference type="CDD" id="cd00400">
    <property type="entry name" value="Voltage_gated_ClC"/>
    <property type="match status" value="1"/>
</dbReference>
<dbReference type="FunFam" id="1.10.3080.10:FF:000010">
    <property type="entry name" value="Voltage-gated ClC-type chloride channel ClcB"/>
    <property type="match status" value="1"/>
</dbReference>
<dbReference type="Gene3D" id="1.10.3080.10">
    <property type="entry name" value="Clc chloride channel"/>
    <property type="match status" value="1"/>
</dbReference>
<dbReference type="HAMAP" id="MF_01203">
    <property type="entry name" value="CLC_ClcB"/>
    <property type="match status" value="1"/>
</dbReference>
<dbReference type="InterPro" id="IPR014743">
    <property type="entry name" value="Cl-channel_core"/>
</dbReference>
<dbReference type="InterPro" id="IPR023790">
    <property type="entry name" value="Cl-channel_volt-gated_ClcB"/>
</dbReference>
<dbReference type="InterPro" id="IPR001807">
    <property type="entry name" value="ClC"/>
</dbReference>
<dbReference type="InterPro" id="IPR050368">
    <property type="entry name" value="ClC-type_chloride_channel"/>
</dbReference>
<dbReference type="NCBIfam" id="NF002437">
    <property type="entry name" value="PRK01610.1"/>
    <property type="match status" value="1"/>
</dbReference>
<dbReference type="PANTHER" id="PTHR43427">
    <property type="entry name" value="CHLORIDE CHANNEL PROTEIN CLC-E"/>
    <property type="match status" value="1"/>
</dbReference>
<dbReference type="PANTHER" id="PTHR43427:SF6">
    <property type="entry name" value="CHLORIDE CHANNEL PROTEIN CLC-E"/>
    <property type="match status" value="1"/>
</dbReference>
<dbReference type="Pfam" id="PF00654">
    <property type="entry name" value="Voltage_CLC"/>
    <property type="match status" value="1"/>
</dbReference>
<dbReference type="PRINTS" id="PR00762">
    <property type="entry name" value="CLCHANNEL"/>
</dbReference>
<dbReference type="SUPFAM" id="SSF81340">
    <property type="entry name" value="Clc chloride channel"/>
    <property type="match status" value="1"/>
</dbReference>
<gene>
    <name type="primary">clcB</name>
    <name type="ordered locus">STY1574</name>
    <name type="ordered locus">t1411</name>
</gene>
<comment type="function">
    <text evidence="1">Probably acts as an electrical shunt for an outwardly-directed proton pump that is linked to amino acid decarboxylation, as part of the extreme acid resistance (XAR) response.</text>
</comment>
<comment type="subcellular location">
    <subcellularLocation>
        <location evidence="1">Cell inner membrane</location>
        <topology evidence="1">Multi-pass membrane protein</topology>
    </subcellularLocation>
</comment>
<comment type="similarity">
    <text evidence="3">Belongs to the chloride channel (TC 2.A.49) family. ClcB subfamily.</text>
</comment>
<comment type="sequence caution" evidence="3">
    <conflict type="erroneous initiation">
        <sequence resource="EMBL-CDS" id="AAO69055"/>
    </conflict>
</comment>
<comment type="sequence caution" evidence="3">
    <conflict type="erroneous initiation">
        <sequence resource="EMBL-CDS" id="CAD01823"/>
    </conflict>
</comment>